<name>RS20_PORG3</name>
<reference key="1">
    <citation type="journal article" date="2008" name="DNA Res.">
        <title>Determination of the genome sequence of Porphyromonas gingivalis strain ATCC 33277 and genomic comparison with strain W83 revealed extensive genome rearrangements in P. gingivalis.</title>
        <authorList>
            <person name="Naito M."/>
            <person name="Hirakawa H."/>
            <person name="Yamashita A."/>
            <person name="Ohara N."/>
            <person name="Shoji M."/>
            <person name="Yukitake H."/>
            <person name="Nakayama K."/>
            <person name="Toh H."/>
            <person name="Yoshimura F."/>
            <person name="Kuhara S."/>
            <person name="Hattori M."/>
            <person name="Hayashi T."/>
            <person name="Nakayama K."/>
        </authorList>
    </citation>
    <scope>NUCLEOTIDE SEQUENCE [LARGE SCALE GENOMIC DNA]</scope>
    <source>
        <strain>ATCC 33277 / DSM 20709 / CIP 103683 / JCM 12257 / NCTC 11834 / 2561</strain>
    </source>
</reference>
<sequence>MANHISSEKRIRQTNARRLHNRYYARTARNAVKAFRALTDRTEAEKKYPVLASMLDRLAGKNIIHKNKAANLKSKLARRINTLA</sequence>
<feature type="chain" id="PRO_1000126493" description="Small ribosomal subunit protein bS20">
    <location>
        <begin position="1"/>
        <end position="84"/>
    </location>
</feature>
<gene>
    <name evidence="1" type="primary">rpsT</name>
    <name type="ordered locus">PGN_0394</name>
</gene>
<evidence type="ECO:0000255" key="1">
    <source>
        <dbReference type="HAMAP-Rule" id="MF_00500"/>
    </source>
</evidence>
<evidence type="ECO:0000305" key="2"/>
<protein>
    <recommendedName>
        <fullName evidence="1">Small ribosomal subunit protein bS20</fullName>
    </recommendedName>
    <alternativeName>
        <fullName evidence="2">30S ribosomal protein S20</fullName>
    </alternativeName>
</protein>
<organism>
    <name type="scientific">Porphyromonas gingivalis (strain ATCC 33277 / DSM 20709 / CIP 103683 / JCM 12257 / NCTC 11834 / 2561)</name>
    <dbReference type="NCBI Taxonomy" id="431947"/>
    <lineage>
        <taxon>Bacteria</taxon>
        <taxon>Pseudomonadati</taxon>
        <taxon>Bacteroidota</taxon>
        <taxon>Bacteroidia</taxon>
        <taxon>Bacteroidales</taxon>
        <taxon>Porphyromonadaceae</taxon>
        <taxon>Porphyromonas</taxon>
    </lineage>
</organism>
<proteinExistence type="inferred from homology"/>
<keyword id="KW-0687">Ribonucleoprotein</keyword>
<keyword id="KW-0689">Ribosomal protein</keyword>
<keyword id="KW-0694">RNA-binding</keyword>
<keyword id="KW-0699">rRNA-binding</keyword>
<comment type="function">
    <text evidence="1">Binds directly to 16S ribosomal RNA.</text>
</comment>
<comment type="similarity">
    <text evidence="1">Belongs to the bacterial ribosomal protein bS20 family.</text>
</comment>
<dbReference type="EMBL" id="AP009380">
    <property type="protein sequence ID" value="BAG32913.1"/>
    <property type="molecule type" value="Genomic_DNA"/>
</dbReference>
<dbReference type="RefSeq" id="WP_005874497.1">
    <property type="nucleotide sequence ID" value="NZ_CP025930.1"/>
</dbReference>
<dbReference type="SMR" id="B2RHR8"/>
<dbReference type="GeneID" id="29255634"/>
<dbReference type="KEGG" id="pgn:PGN_0394"/>
<dbReference type="eggNOG" id="COG0268">
    <property type="taxonomic scope" value="Bacteria"/>
</dbReference>
<dbReference type="HOGENOM" id="CLU_160655_3_2_10"/>
<dbReference type="OrthoDB" id="9808392at2"/>
<dbReference type="BioCyc" id="PGIN431947:G1G2V-433-MONOMER"/>
<dbReference type="Proteomes" id="UP000008842">
    <property type="component" value="Chromosome"/>
</dbReference>
<dbReference type="GO" id="GO:0005829">
    <property type="term" value="C:cytosol"/>
    <property type="evidence" value="ECO:0007669"/>
    <property type="project" value="TreeGrafter"/>
</dbReference>
<dbReference type="GO" id="GO:0015935">
    <property type="term" value="C:small ribosomal subunit"/>
    <property type="evidence" value="ECO:0007669"/>
    <property type="project" value="TreeGrafter"/>
</dbReference>
<dbReference type="GO" id="GO:0070181">
    <property type="term" value="F:small ribosomal subunit rRNA binding"/>
    <property type="evidence" value="ECO:0007669"/>
    <property type="project" value="TreeGrafter"/>
</dbReference>
<dbReference type="GO" id="GO:0003735">
    <property type="term" value="F:structural constituent of ribosome"/>
    <property type="evidence" value="ECO:0007669"/>
    <property type="project" value="InterPro"/>
</dbReference>
<dbReference type="GO" id="GO:0006412">
    <property type="term" value="P:translation"/>
    <property type="evidence" value="ECO:0007669"/>
    <property type="project" value="UniProtKB-UniRule"/>
</dbReference>
<dbReference type="Gene3D" id="1.20.58.110">
    <property type="entry name" value="Ribosomal protein S20"/>
    <property type="match status" value="1"/>
</dbReference>
<dbReference type="HAMAP" id="MF_00500">
    <property type="entry name" value="Ribosomal_bS20"/>
    <property type="match status" value="1"/>
</dbReference>
<dbReference type="InterPro" id="IPR002583">
    <property type="entry name" value="Ribosomal_bS20"/>
</dbReference>
<dbReference type="InterPro" id="IPR036510">
    <property type="entry name" value="Ribosomal_bS20_sf"/>
</dbReference>
<dbReference type="NCBIfam" id="TIGR00029">
    <property type="entry name" value="S20"/>
    <property type="match status" value="1"/>
</dbReference>
<dbReference type="PANTHER" id="PTHR33398">
    <property type="entry name" value="30S RIBOSOMAL PROTEIN S20"/>
    <property type="match status" value="1"/>
</dbReference>
<dbReference type="PANTHER" id="PTHR33398:SF1">
    <property type="entry name" value="SMALL RIBOSOMAL SUBUNIT PROTEIN BS20C"/>
    <property type="match status" value="1"/>
</dbReference>
<dbReference type="Pfam" id="PF01649">
    <property type="entry name" value="Ribosomal_S20p"/>
    <property type="match status" value="1"/>
</dbReference>
<dbReference type="SUPFAM" id="SSF46992">
    <property type="entry name" value="Ribosomal protein S20"/>
    <property type="match status" value="1"/>
</dbReference>
<accession>B2RHR8</accession>